<accession>P11110</accession>
<protein>
    <recommendedName>
        <fullName>Neck protein gp13</fullName>
    </recommendedName>
    <alternativeName>
        <fullName>Gene product 13</fullName>
        <shortName>gp13</shortName>
    </alternativeName>
</protein>
<organismHost>
    <name type="scientific">Escherichia coli</name>
    <dbReference type="NCBI Taxonomy" id="562"/>
</organismHost>
<keyword id="KW-1185">Reference proteome</keyword>
<keyword id="KW-0946">Virion</keyword>
<organism>
    <name type="scientific">Enterobacteria phage T4</name>
    <name type="common">Bacteriophage T4</name>
    <dbReference type="NCBI Taxonomy" id="10665"/>
    <lineage>
        <taxon>Viruses</taxon>
        <taxon>Duplodnaviria</taxon>
        <taxon>Heunggongvirae</taxon>
        <taxon>Uroviricota</taxon>
        <taxon>Caudoviricetes</taxon>
        <taxon>Straboviridae</taxon>
        <taxon>Tevenvirinae</taxon>
        <taxon>Tequatrovirus</taxon>
    </lineage>
</organism>
<feature type="chain" id="PRO_0000165003" description="Neck protein gp13">
    <location>
        <begin position="1"/>
        <end position="309"/>
    </location>
</feature>
<dbReference type="EMBL" id="X14868">
    <property type="protein sequence ID" value="CAA33007.1"/>
    <property type="molecule type" value="Genomic_DNA"/>
</dbReference>
<dbReference type="EMBL" id="AF158101">
    <property type="protein sequence ID" value="AAD42418.1"/>
    <property type="molecule type" value="Genomic_DNA"/>
</dbReference>
<dbReference type="PIR" id="JF0052">
    <property type="entry name" value="GTBPT4"/>
</dbReference>
<dbReference type="RefSeq" id="NP_049772.1">
    <property type="nucleotide sequence ID" value="NC_000866.4"/>
</dbReference>
<dbReference type="SMR" id="P11110"/>
<dbReference type="GeneID" id="1258809"/>
<dbReference type="KEGG" id="vg:1258809"/>
<dbReference type="OrthoDB" id="6993at10239"/>
<dbReference type="Proteomes" id="UP000009087">
    <property type="component" value="Segment"/>
</dbReference>
<dbReference type="GO" id="GO:0044423">
    <property type="term" value="C:virion component"/>
    <property type="evidence" value="ECO:0007669"/>
    <property type="project" value="UniProtKB-KW"/>
</dbReference>
<sequence length="309" mass="34741">MSGYNPQNPKELKDVILRRLGAPIINVELTPDQIYDCIQRALELYGEYHFDGLNKGFHVFYVGDDEERYKTGVFDLRGSNVFAVTRILRTNIGSITSMDGNATYPWFTDFLLGMAGINGGMGTSCNRFYGPNAFGADLGYFTQLTSYMGMMQDMLSPIPDFWFNSANEQLKVMGNFQKYDLIIVESWTKSYIDTNKMVGNTVGYGTVGPQDSWSLSERYNNPDHNLVGRVVGQDPNVKQGAYNNRWVKDYATALAKELNGQILARHQGMMLPGGVTIDGQRLIEEARLEKEALREELYLLDPPFGILVG</sequence>
<evidence type="ECO:0000269" key="1">
    <source>
    </source>
</evidence>
<proteinExistence type="evidence at protein level"/>
<gene>
    <name type="primary">13</name>
</gene>
<name>NECK1_BPT4</name>
<comment type="function">
    <text evidence="1">Plays a role in the association of the virion head and tail after packaging of viral DNA within the head. Together with gp14, forms a neck at the portal vertex of the head to be ready for the tail attachment.</text>
</comment>
<comment type="subunit">
    <text>Gp13 and gp14 form a hetero-oligomer complex with a stoichiometry of 10:5.</text>
</comment>
<comment type="subcellular location">
    <subcellularLocation>
        <location>Virion</location>
    </subcellularLocation>
</comment>
<reference key="1">
    <citation type="journal article" date="1989" name="Nucleic Acids Res.">
        <title>Nucleotide sequences of bacteriophage T4 genes 13, 14 and 15.</title>
        <authorList>
            <person name="Selivanov N.A."/>
            <person name="Prilipov A.G."/>
            <person name="Mesyanzhinov V.V."/>
        </authorList>
    </citation>
    <scope>NUCLEOTIDE SEQUENCE [GENOMIC DNA]</scope>
    <source>
        <strain>D</strain>
    </source>
</reference>
<reference key="2">
    <citation type="journal article" date="2003" name="Microbiol. Mol. Biol. Rev.">
        <title>Bacteriophage T4 genome.</title>
        <authorList>
            <person name="Miller E.S."/>
            <person name="Kutter E."/>
            <person name="Mosig G."/>
            <person name="Arisaka F."/>
            <person name="Kunisawa T."/>
            <person name="Ruger W."/>
        </authorList>
    </citation>
    <scope>NUCLEOTIDE SEQUENCE [LARGE SCALE GENOMIC DNA]</scope>
</reference>
<reference key="3">
    <citation type="journal article" date="2007" name="Biochim. Biophys. Acta">
        <title>The neck of bacteriophage T4 is a ring-like structure formed by a hetero-oligomer of gp13 and gp14.</title>
        <authorList>
            <person name="Akhter T."/>
            <person name="Zhao L."/>
            <person name="Kohda A."/>
            <person name="Mio K."/>
            <person name="Kanamaru S."/>
            <person name="Arisaka F."/>
        </authorList>
    </citation>
    <scope>FUNCTION</scope>
    <scope>SUBUNIT</scope>
</reference>